<evidence type="ECO:0000255" key="1">
    <source>
        <dbReference type="HAMAP-Rule" id="MF_01849"/>
    </source>
</evidence>
<evidence type="ECO:0000255" key="2">
    <source>
        <dbReference type="PROSITE-ProRule" id="PRU01266"/>
    </source>
</evidence>
<accession>A9KM95</accession>
<protein>
    <recommendedName>
        <fullName evidence="1">Probable dual-specificity RNA methyltransferase RlmN</fullName>
        <ecNumber evidence="1">2.1.1.192</ecNumber>
    </recommendedName>
    <alternativeName>
        <fullName evidence="1">23S rRNA (adenine(2503)-C(2))-methyltransferase</fullName>
    </alternativeName>
    <alternativeName>
        <fullName evidence="1">23S rRNA m2A2503 methyltransferase</fullName>
    </alternativeName>
    <alternativeName>
        <fullName evidence="1">Ribosomal RNA large subunit methyltransferase N</fullName>
    </alternativeName>
    <alternativeName>
        <fullName evidence="1">tRNA (adenine(37)-C(2))-methyltransferase</fullName>
    </alternativeName>
    <alternativeName>
        <fullName evidence="1">tRNA m2A37 methyltransferase</fullName>
    </alternativeName>
</protein>
<feature type="chain" id="PRO_0000350130" description="Probable dual-specificity RNA methyltransferase RlmN">
    <location>
        <begin position="1"/>
        <end position="356"/>
    </location>
</feature>
<feature type="domain" description="Radical SAM core" evidence="2">
    <location>
        <begin position="103"/>
        <end position="333"/>
    </location>
</feature>
<feature type="active site" description="Proton acceptor" evidence="1">
    <location>
        <position position="97"/>
    </location>
</feature>
<feature type="active site" description="S-methylcysteine intermediate" evidence="1">
    <location>
        <position position="338"/>
    </location>
</feature>
<feature type="binding site" evidence="1">
    <location>
        <position position="117"/>
    </location>
    <ligand>
        <name>[4Fe-4S] cluster</name>
        <dbReference type="ChEBI" id="CHEBI:49883"/>
        <note>4Fe-4S-S-AdoMet</note>
    </ligand>
</feature>
<feature type="binding site" evidence="1">
    <location>
        <position position="121"/>
    </location>
    <ligand>
        <name>[4Fe-4S] cluster</name>
        <dbReference type="ChEBI" id="CHEBI:49883"/>
        <note>4Fe-4S-S-AdoMet</note>
    </ligand>
</feature>
<feature type="binding site" evidence="1">
    <location>
        <position position="124"/>
    </location>
    <ligand>
        <name>[4Fe-4S] cluster</name>
        <dbReference type="ChEBI" id="CHEBI:49883"/>
        <note>4Fe-4S-S-AdoMet</note>
    </ligand>
</feature>
<feature type="binding site" evidence="1">
    <location>
        <begin position="164"/>
        <end position="165"/>
    </location>
    <ligand>
        <name>S-adenosyl-L-methionine</name>
        <dbReference type="ChEBI" id="CHEBI:59789"/>
    </ligand>
</feature>
<feature type="binding site" evidence="1">
    <location>
        <position position="196"/>
    </location>
    <ligand>
        <name>S-adenosyl-L-methionine</name>
        <dbReference type="ChEBI" id="CHEBI:59789"/>
    </ligand>
</feature>
<feature type="binding site" evidence="1">
    <location>
        <begin position="219"/>
        <end position="221"/>
    </location>
    <ligand>
        <name>S-adenosyl-L-methionine</name>
        <dbReference type="ChEBI" id="CHEBI:59789"/>
    </ligand>
</feature>
<feature type="binding site" evidence="1">
    <location>
        <position position="295"/>
    </location>
    <ligand>
        <name>S-adenosyl-L-methionine</name>
        <dbReference type="ChEBI" id="CHEBI:59789"/>
    </ligand>
</feature>
<feature type="disulfide bond" description="(transient)" evidence="1">
    <location>
        <begin position="110"/>
        <end position="338"/>
    </location>
</feature>
<organism>
    <name type="scientific">Lachnoclostridium phytofermentans (strain ATCC 700394 / DSM 18823 / ISDg)</name>
    <name type="common">Clostridium phytofermentans</name>
    <dbReference type="NCBI Taxonomy" id="357809"/>
    <lineage>
        <taxon>Bacteria</taxon>
        <taxon>Bacillati</taxon>
        <taxon>Bacillota</taxon>
        <taxon>Clostridia</taxon>
        <taxon>Lachnospirales</taxon>
        <taxon>Lachnospiraceae</taxon>
    </lineage>
</organism>
<name>RLMN_LACP7</name>
<keyword id="KW-0004">4Fe-4S</keyword>
<keyword id="KW-0963">Cytoplasm</keyword>
<keyword id="KW-1015">Disulfide bond</keyword>
<keyword id="KW-0408">Iron</keyword>
<keyword id="KW-0411">Iron-sulfur</keyword>
<keyword id="KW-0479">Metal-binding</keyword>
<keyword id="KW-0489">Methyltransferase</keyword>
<keyword id="KW-1185">Reference proteome</keyword>
<keyword id="KW-0698">rRNA processing</keyword>
<keyword id="KW-0949">S-adenosyl-L-methionine</keyword>
<keyword id="KW-0808">Transferase</keyword>
<keyword id="KW-0819">tRNA processing</keyword>
<dbReference type="EC" id="2.1.1.192" evidence="1"/>
<dbReference type="EMBL" id="CP000885">
    <property type="protein sequence ID" value="ABX42849.1"/>
    <property type="molecule type" value="Genomic_DNA"/>
</dbReference>
<dbReference type="RefSeq" id="WP_012200502.1">
    <property type="nucleotide sequence ID" value="NC_010001.1"/>
</dbReference>
<dbReference type="SMR" id="A9KM95"/>
<dbReference type="STRING" id="357809.Cphy_2488"/>
<dbReference type="KEGG" id="cpy:Cphy_2488"/>
<dbReference type="eggNOG" id="COG0820">
    <property type="taxonomic scope" value="Bacteria"/>
</dbReference>
<dbReference type="HOGENOM" id="CLU_029101_0_1_9"/>
<dbReference type="OrthoDB" id="9793973at2"/>
<dbReference type="Proteomes" id="UP000000370">
    <property type="component" value="Chromosome"/>
</dbReference>
<dbReference type="GO" id="GO:0005737">
    <property type="term" value="C:cytoplasm"/>
    <property type="evidence" value="ECO:0007669"/>
    <property type="project" value="UniProtKB-SubCell"/>
</dbReference>
<dbReference type="GO" id="GO:0051539">
    <property type="term" value="F:4 iron, 4 sulfur cluster binding"/>
    <property type="evidence" value="ECO:0007669"/>
    <property type="project" value="UniProtKB-UniRule"/>
</dbReference>
<dbReference type="GO" id="GO:0046872">
    <property type="term" value="F:metal ion binding"/>
    <property type="evidence" value="ECO:0007669"/>
    <property type="project" value="UniProtKB-KW"/>
</dbReference>
<dbReference type="GO" id="GO:0070040">
    <property type="term" value="F:rRNA (adenine(2503)-C2-)-methyltransferase activity"/>
    <property type="evidence" value="ECO:0007669"/>
    <property type="project" value="UniProtKB-UniRule"/>
</dbReference>
<dbReference type="GO" id="GO:0019843">
    <property type="term" value="F:rRNA binding"/>
    <property type="evidence" value="ECO:0007669"/>
    <property type="project" value="UniProtKB-UniRule"/>
</dbReference>
<dbReference type="GO" id="GO:0002935">
    <property type="term" value="F:tRNA (adenine(37)-C2)-methyltransferase activity"/>
    <property type="evidence" value="ECO:0007669"/>
    <property type="project" value="UniProtKB-UniRule"/>
</dbReference>
<dbReference type="GO" id="GO:0000049">
    <property type="term" value="F:tRNA binding"/>
    <property type="evidence" value="ECO:0007669"/>
    <property type="project" value="UniProtKB-UniRule"/>
</dbReference>
<dbReference type="GO" id="GO:0070475">
    <property type="term" value="P:rRNA base methylation"/>
    <property type="evidence" value="ECO:0007669"/>
    <property type="project" value="UniProtKB-UniRule"/>
</dbReference>
<dbReference type="GO" id="GO:0030488">
    <property type="term" value="P:tRNA methylation"/>
    <property type="evidence" value="ECO:0007669"/>
    <property type="project" value="UniProtKB-UniRule"/>
</dbReference>
<dbReference type="CDD" id="cd01335">
    <property type="entry name" value="Radical_SAM"/>
    <property type="match status" value="1"/>
</dbReference>
<dbReference type="FunFam" id="3.20.20.70:FF:000014">
    <property type="entry name" value="Probable dual-specificity RNA methyltransferase RlmN"/>
    <property type="match status" value="1"/>
</dbReference>
<dbReference type="Gene3D" id="1.10.150.530">
    <property type="match status" value="1"/>
</dbReference>
<dbReference type="Gene3D" id="3.20.20.70">
    <property type="entry name" value="Aldolase class I"/>
    <property type="match status" value="1"/>
</dbReference>
<dbReference type="HAMAP" id="MF_01849">
    <property type="entry name" value="RNA_methyltr_RlmN"/>
    <property type="match status" value="1"/>
</dbReference>
<dbReference type="InterPro" id="IPR013785">
    <property type="entry name" value="Aldolase_TIM"/>
</dbReference>
<dbReference type="InterPro" id="IPR040072">
    <property type="entry name" value="Methyltransferase_A"/>
</dbReference>
<dbReference type="InterPro" id="IPR048641">
    <property type="entry name" value="RlmN_N"/>
</dbReference>
<dbReference type="InterPro" id="IPR027492">
    <property type="entry name" value="RNA_MTrfase_RlmN"/>
</dbReference>
<dbReference type="InterPro" id="IPR004383">
    <property type="entry name" value="rRNA_lsu_MTrfase_RlmN/Cfr"/>
</dbReference>
<dbReference type="InterPro" id="IPR007197">
    <property type="entry name" value="rSAM"/>
</dbReference>
<dbReference type="NCBIfam" id="TIGR00048">
    <property type="entry name" value="rRNA_mod_RlmN"/>
    <property type="match status" value="1"/>
</dbReference>
<dbReference type="PANTHER" id="PTHR30544">
    <property type="entry name" value="23S RRNA METHYLTRANSFERASE"/>
    <property type="match status" value="1"/>
</dbReference>
<dbReference type="PANTHER" id="PTHR30544:SF5">
    <property type="entry name" value="RADICAL SAM CORE DOMAIN-CONTAINING PROTEIN"/>
    <property type="match status" value="1"/>
</dbReference>
<dbReference type="Pfam" id="PF04055">
    <property type="entry name" value="Radical_SAM"/>
    <property type="match status" value="1"/>
</dbReference>
<dbReference type="Pfam" id="PF21016">
    <property type="entry name" value="RlmN_N"/>
    <property type="match status" value="1"/>
</dbReference>
<dbReference type="PIRSF" id="PIRSF006004">
    <property type="entry name" value="CHP00048"/>
    <property type="match status" value="1"/>
</dbReference>
<dbReference type="SFLD" id="SFLDF00275">
    <property type="entry name" value="adenosine_C2_methyltransferase"/>
    <property type="match status" value="1"/>
</dbReference>
<dbReference type="SFLD" id="SFLDS00029">
    <property type="entry name" value="Radical_SAM"/>
    <property type="match status" value="1"/>
</dbReference>
<dbReference type="SUPFAM" id="SSF102114">
    <property type="entry name" value="Radical SAM enzymes"/>
    <property type="match status" value="1"/>
</dbReference>
<dbReference type="PROSITE" id="PS51918">
    <property type="entry name" value="RADICAL_SAM"/>
    <property type="match status" value="1"/>
</dbReference>
<gene>
    <name evidence="1" type="primary">rlmN</name>
    <name type="ordered locus">Cphy_2488</name>
</gene>
<comment type="function">
    <text evidence="1">Specifically methylates position 2 of adenine 2503 in 23S rRNA and position 2 of adenine 37 in tRNAs.</text>
</comment>
<comment type="catalytic activity">
    <reaction evidence="1">
        <text>adenosine(2503) in 23S rRNA + 2 reduced [2Fe-2S]-[ferredoxin] + 2 S-adenosyl-L-methionine = 2-methyladenosine(2503) in 23S rRNA + 5'-deoxyadenosine + L-methionine + 2 oxidized [2Fe-2S]-[ferredoxin] + S-adenosyl-L-homocysteine</text>
        <dbReference type="Rhea" id="RHEA:42916"/>
        <dbReference type="Rhea" id="RHEA-COMP:10000"/>
        <dbReference type="Rhea" id="RHEA-COMP:10001"/>
        <dbReference type="Rhea" id="RHEA-COMP:10152"/>
        <dbReference type="Rhea" id="RHEA-COMP:10282"/>
        <dbReference type="ChEBI" id="CHEBI:17319"/>
        <dbReference type="ChEBI" id="CHEBI:33737"/>
        <dbReference type="ChEBI" id="CHEBI:33738"/>
        <dbReference type="ChEBI" id="CHEBI:57844"/>
        <dbReference type="ChEBI" id="CHEBI:57856"/>
        <dbReference type="ChEBI" id="CHEBI:59789"/>
        <dbReference type="ChEBI" id="CHEBI:74411"/>
        <dbReference type="ChEBI" id="CHEBI:74497"/>
        <dbReference type="EC" id="2.1.1.192"/>
    </reaction>
</comment>
<comment type="catalytic activity">
    <reaction evidence="1">
        <text>adenosine(37) in tRNA + 2 reduced [2Fe-2S]-[ferredoxin] + 2 S-adenosyl-L-methionine = 2-methyladenosine(37) in tRNA + 5'-deoxyadenosine + L-methionine + 2 oxidized [2Fe-2S]-[ferredoxin] + S-adenosyl-L-homocysteine</text>
        <dbReference type="Rhea" id="RHEA:43332"/>
        <dbReference type="Rhea" id="RHEA-COMP:10000"/>
        <dbReference type="Rhea" id="RHEA-COMP:10001"/>
        <dbReference type="Rhea" id="RHEA-COMP:10162"/>
        <dbReference type="Rhea" id="RHEA-COMP:10485"/>
        <dbReference type="ChEBI" id="CHEBI:17319"/>
        <dbReference type="ChEBI" id="CHEBI:33737"/>
        <dbReference type="ChEBI" id="CHEBI:33738"/>
        <dbReference type="ChEBI" id="CHEBI:57844"/>
        <dbReference type="ChEBI" id="CHEBI:57856"/>
        <dbReference type="ChEBI" id="CHEBI:59789"/>
        <dbReference type="ChEBI" id="CHEBI:74411"/>
        <dbReference type="ChEBI" id="CHEBI:74497"/>
        <dbReference type="EC" id="2.1.1.192"/>
    </reaction>
</comment>
<comment type="cofactor">
    <cofactor evidence="1">
        <name>[4Fe-4S] cluster</name>
        <dbReference type="ChEBI" id="CHEBI:49883"/>
    </cofactor>
    <text evidence="1">Binds 1 [4Fe-4S] cluster. The cluster is coordinated with 3 cysteines and an exchangeable S-adenosyl-L-methionine.</text>
</comment>
<comment type="subcellular location">
    <subcellularLocation>
        <location evidence="1">Cytoplasm</location>
    </subcellularLocation>
</comment>
<comment type="miscellaneous">
    <text evidence="1">Reaction proceeds by a ping-pong mechanism involving intermediate methylation of a conserved cysteine residue.</text>
</comment>
<comment type="similarity">
    <text evidence="1">Belongs to the radical SAM superfamily. RlmN family.</text>
</comment>
<sequence>MQSITEKIDIKALTLEELKASLKIIGEKEFRAKQIYEWLHVKLVRDFEEMTNLSKELRAKLASEYELICVNDLERYESKMDGTVKYLFRLSDGNVVECVLMKYHHGNSVCISSQVGCRMGCRFCASTLGGLTRNLKTSEMLDEVYQIQRLSGERVSNIVIMGTGEPMDNYDNFVKFIRMISSSDGLNISQRNITVSTCGIVPKMRALAEEGFAITLALSLHAPNDEERAKIMPVANSYQLQDVLNACDYYYEKTGRRVSYEYSLVDGVNDTAACAKELSRLLKGKNCHVNLIPVNPIKERDYKRSTGNNIQNFKNILEKNRINVTIRREMGSDINAACGQLRKSYTDKTMVQEVNL</sequence>
<proteinExistence type="inferred from homology"/>
<reference key="1">
    <citation type="submission" date="2007-11" db="EMBL/GenBank/DDBJ databases">
        <title>Complete genome sequence of Clostridium phytofermentans ISDg.</title>
        <authorList>
            <person name="Leschine S.B."/>
            <person name="Warnick T.A."/>
            <person name="Blanchard J.L."/>
            <person name="Schnell D.J."/>
            <person name="Petit E.L."/>
            <person name="LaTouf W.G."/>
            <person name="Copeland A."/>
            <person name="Lucas S."/>
            <person name="Lapidus A."/>
            <person name="Barry K."/>
            <person name="Glavina del Rio T."/>
            <person name="Dalin E."/>
            <person name="Tice H."/>
            <person name="Pitluck S."/>
            <person name="Kiss H."/>
            <person name="Brettin T."/>
            <person name="Bruce D."/>
            <person name="Detter J.C."/>
            <person name="Han C."/>
            <person name="Kuske C."/>
            <person name="Schmutz J."/>
            <person name="Larimer F."/>
            <person name="Land M."/>
            <person name="Hauser L."/>
            <person name="Kyrpides N."/>
            <person name="Kim E.A."/>
            <person name="Richardson P."/>
        </authorList>
    </citation>
    <scope>NUCLEOTIDE SEQUENCE [LARGE SCALE GENOMIC DNA]</scope>
    <source>
        <strain>ATCC 700394 / DSM 18823 / ISDg</strain>
    </source>
</reference>